<feature type="chain" id="PRO_0000365879" description="ATP synthase subunit c">
    <location>
        <begin position="1"/>
        <end position="76"/>
    </location>
</feature>
<feature type="transmembrane region" description="Helical" evidence="1">
    <location>
        <begin position="8"/>
        <end position="28"/>
    </location>
</feature>
<feature type="transmembrane region" description="Helical" evidence="1">
    <location>
        <begin position="55"/>
        <end position="75"/>
    </location>
</feature>
<feature type="site" description="Reversibly protonated during proton transport" evidence="1">
    <location>
        <position position="59"/>
    </location>
</feature>
<accession>Q3ZZU2</accession>
<proteinExistence type="inferred from homology"/>
<reference key="1">
    <citation type="journal article" date="2005" name="Nat. Biotechnol.">
        <title>Genome sequence of the chlorinated compound-respiring bacterium Dehalococcoides species strain CBDB1.</title>
        <authorList>
            <person name="Kube M."/>
            <person name="Beck A."/>
            <person name="Zinder S.H."/>
            <person name="Kuhl H."/>
            <person name="Reinhardt R."/>
            <person name="Adrian L."/>
        </authorList>
    </citation>
    <scope>NUCLEOTIDE SEQUENCE [LARGE SCALE GENOMIC DNA]</scope>
    <source>
        <strain>CBDB1</strain>
    </source>
</reference>
<evidence type="ECO:0000255" key="1">
    <source>
        <dbReference type="HAMAP-Rule" id="MF_01396"/>
    </source>
</evidence>
<organism>
    <name type="scientific">Dehalococcoides mccartyi (strain CBDB1)</name>
    <dbReference type="NCBI Taxonomy" id="255470"/>
    <lineage>
        <taxon>Bacteria</taxon>
        <taxon>Bacillati</taxon>
        <taxon>Chloroflexota</taxon>
        <taxon>Dehalococcoidia</taxon>
        <taxon>Dehalococcoidales</taxon>
        <taxon>Dehalococcoidaceae</taxon>
        <taxon>Dehalococcoides</taxon>
    </lineage>
</organism>
<sequence length="76" mass="7611">MEADVIKLLAAGLAMGLGAIGPGIGVGILGFGALQAIGRNPEAKGSIFTNMILLVAFAESIAIFALVISIVLIFVA</sequence>
<comment type="function">
    <text evidence="1">F(1)F(0) ATP synthase produces ATP from ADP in the presence of a proton or sodium gradient. F-type ATPases consist of two structural domains, F(1) containing the extramembraneous catalytic core and F(0) containing the membrane proton channel, linked together by a central stalk and a peripheral stalk. During catalysis, ATP synthesis in the catalytic domain of F(1) is coupled via a rotary mechanism of the central stalk subunits to proton translocation.</text>
</comment>
<comment type="function">
    <text evidence="1">Key component of the F(0) channel; it plays a direct role in translocation across the membrane. A homomeric c-ring of between 10-14 subunits forms the central stalk rotor element with the F(1) delta and epsilon subunits.</text>
</comment>
<comment type="subunit">
    <text evidence="1">F-type ATPases have 2 components, F(1) - the catalytic core - and F(0) - the membrane proton channel. F(1) has five subunits: alpha(3), beta(3), gamma(1), delta(1), epsilon(1). F(0) has three main subunits: a(1), b(2) and c(10-14). The alpha and beta chains form an alternating ring which encloses part of the gamma chain. F(1) is attached to F(0) by a central stalk formed by the gamma and epsilon chains, while a peripheral stalk is formed by the delta and b chains.</text>
</comment>
<comment type="subcellular location">
    <subcellularLocation>
        <location evidence="1">Cell membrane</location>
        <topology evidence="1">Multi-pass membrane protein</topology>
    </subcellularLocation>
</comment>
<comment type="similarity">
    <text evidence="1">Belongs to the ATPase C chain family.</text>
</comment>
<dbReference type="EMBL" id="AJ965256">
    <property type="protein sequence ID" value="CAI82721.1"/>
    <property type="molecule type" value="Genomic_DNA"/>
</dbReference>
<dbReference type="RefSeq" id="WP_010936335.1">
    <property type="nucleotide sequence ID" value="NC_007356.1"/>
</dbReference>
<dbReference type="SMR" id="Q3ZZU2"/>
<dbReference type="GeneID" id="3230099"/>
<dbReference type="KEGG" id="deh:cbdbA533"/>
<dbReference type="HOGENOM" id="CLU_148047_5_0_0"/>
<dbReference type="Proteomes" id="UP000000433">
    <property type="component" value="Chromosome"/>
</dbReference>
<dbReference type="GO" id="GO:0005886">
    <property type="term" value="C:plasma membrane"/>
    <property type="evidence" value="ECO:0007669"/>
    <property type="project" value="UniProtKB-SubCell"/>
</dbReference>
<dbReference type="GO" id="GO:0045259">
    <property type="term" value="C:proton-transporting ATP synthase complex"/>
    <property type="evidence" value="ECO:0007669"/>
    <property type="project" value="UniProtKB-KW"/>
</dbReference>
<dbReference type="GO" id="GO:0033177">
    <property type="term" value="C:proton-transporting two-sector ATPase complex, proton-transporting domain"/>
    <property type="evidence" value="ECO:0007669"/>
    <property type="project" value="InterPro"/>
</dbReference>
<dbReference type="GO" id="GO:0008289">
    <property type="term" value="F:lipid binding"/>
    <property type="evidence" value="ECO:0007669"/>
    <property type="project" value="UniProtKB-KW"/>
</dbReference>
<dbReference type="GO" id="GO:0046933">
    <property type="term" value="F:proton-transporting ATP synthase activity, rotational mechanism"/>
    <property type="evidence" value="ECO:0007669"/>
    <property type="project" value="UniProtKB-UniRule"/>
</dbReference>
<dbReference type="CDD" id="cd18121">
    <property type="entry name" value="ATP-synt_Fo_c"/>
    <property type="match status" value="1"/>
</dbReference>
<dbReference type="FunFam" id="1.20.20.10:FF:000002">
    <property type="entry name" value="ATP synthase subunit c"/>
    <property type="match status" value="1"/>
</dbReference>
<dbReference type="Gene3D" id="1.20.20.10">
    <property type="entry name" value="F1F0 ATP synthase subunit C"/>
    <property type="match status" value="1"/>
</dbReference>
<dbReference type="HAMAP" id="MF_01396">
    <property type="entry name" value="ATP_synth_c_bact"/>
    <property type="match status" value="1"/>
</dbReference>
<dbReference type="InterPro" id="IPR005953">
    <property type="entry name" value="ATP_synth_csu_bac/chlpt"/>
</dbReference>
<dbReference type="InterPro" id="IPR000454">
    <property type="entry name" value="ATP_synth_F0_csu"/>
</dbReference>
<dbReference type="InterPro" id="IPR020537">
    <property type="entry name" value="ATP_synth_F0_csu_DDCD_BS"/>
</dbReference>
<dbReference type="InterPro" id="IPR038662">
    <property type="entry name" value="ATP_synth_F0_csu_sf"/>
</dbReference>
<dbReference type="InterPro" id="IPR002379">
    <property type="entry name" value="ATPase_proteolipid_c-like_dom"/>
</dbReference>
<dbReference type="InterPro" id="IPR035921">
    <property type="entry name" value="F/V-ATP_Csub_sf"/>
</dbReference>
<dbReference type="NCBIfam" id="TIGR01260">
    <property type="entry name" value="ATP_synt_c"/>
    <property type="match status" value="1"/>
</dbReference>
<dbReference type="Pfam" id="PF00137">
    <property type="entry name" value="ATP-synt_C"/>
    <property type="match status" value="1"/>
</dbReference>
<dbReference type="PRINTS" id="PR00124">
    <property type="entry name" value="ATPASEC"/>
</dbReference>
<dbReference type="SUPFAM" id="SSF81333">
    <property type="entry name" value="F1F0 ATP synthase subunit C"/>
    <property type="match status" value="1"/>
</dbReference>
<dbReference type="PROSITE" id="PS00605">
    <property type="entry name" value="ATPASE_C"/>
    <property type="match status" value="1"/>
</dbReference>
<name>ATPL_DEHMC</name>
<keyword id="KW-0066">ATP synthesis</keyword>
<keyword id="KW-1003">Cell membrane</keyword>
<keyword id="KW-0138">CF(0)</keyword>
<keyword id="KW-0375">Hydrogen ion transport</keyword>
<keyword id="KW-0406">Ion transport</keyword>
<keyword id="KW-0446">Lipid-binding</keyword>
<keyword id="KW-0472">Membrane</keyword>
<keyword id="KW-0812">Transmembrane</keyword>
<keyword id="KW-1133">Transmembrane helix</keyword>
<keyword id="KW-0813">Transport</keyword>
<gene>
    <name evidence="1" type="primary">atpE</name>
    <name type="ordered locus">cbdbA533</name>
</gene>
<protein>
    <recommendedName>
        <fullName evidence="1">ATP synthase subunit c</fullName>
    </recommendedName>
    <alternativeName>
        <fullName evidence="1">ATP synthase F(0) sector subunit c</fullName>
    </alternativeName>
    <alternativeName>
        <fullName evidence="1">F-type ATPase subunit c</fullName>
        <shortName evidence="1">F-ATPase subunit c</shortName>
    </alternativeName>
    <alternativeName>
        <fullName evidence="1">Lipid-binding protein</fullName>
    </alternativeName>
</protein>